<protein>
    <recommendedName>
        <fullName>Heme transporter HRG1</fullName>
    </recommendedName>
    <alternativeName>
        <fullName>Heme-responsive gene 1 protein homolog</fullName>
        <shortName>HRG-1</shortName>
    </alternativeName>
    <alternativeName>
        <fullName>Solute carrier family 48 member 1</fullName>
    </alternativeName>
</protein>
<organism>
    <name type="scientific">Gallus gallus</name>
    <name type="common">Chicken</name>
    <dbReference type="NCBI Taxonomy" id="9031"/>
    <lineage>
        <taxon>Eukaryota</taxon>
        <taxon>Metazoa</taxon>
        <taxon>Chordata</taxon>
        <taxon>Craniata</taxon>
        <taxon>Vertebrata</taxon>
        <taxon>Euteleostomi</taxon>
        <taxon>Archelosauria</taxon>
        <taxon>Archosauria</taxon>
        <taxon>Dinosauria</taxon>
        <taxon>Saurischia</taxon>
        <taxon>Theropoda</taxon>
        <taxon>Coelurosauria</taxon>
        <taxon>Aves</taxon>
        <taxon>Neognathae</taxon>
        <taxon>Galloanserae</taxon>
        <taxon>Galliformes</taxon>
        <taxon>Phasianidae</taxon>
        <taxon>Phasianinae</taxon>
        <taxon>Gallus</taxon>
    </lineage>
</organism>
<sequence length="147" mass="16523">MAVSRALALRLAYAAAGALMGFSAFFTWSLAPAFRQPATAAAGGLSGVLALWALITHVMYVQDYWRTWLKGLRFFLFIGILFSALSVVGFCTFLVLAITQHQSLTDPRSYYLSCVWSFISLKWAFLLSLYAYRYRNEFADISILSDF</sequence>
<accession>Q5ZHU0</accession>
<gene>
    <name type="primary">SLC48A1</name>
    <name type="synonym">HRG1</name>
    <name type="ORF">RCJMB04_33e14</name>
</gene>
<feature type="chain" id="PRO_0000348578" description="Heme transporter HRG1">
    <location>
        <begin position="1"/>
        <end position="147"/>
    </location>
</feature>
<feature type="transmembrane region" description="Helical" evidence="3">
    <location>
        <begin position="11"/>
        <end position="31"/>
    </location>
</feature>
<feature type="transmembrane region" description="Helical" evidence="3">
    <location>
        <begin position="41"/>
        <end position="61"/>
    </location>
</feature>
<feature type="transmembrane region" description="Helical" evidence="3">
    <location>
        <begin position="74"/>
        <end position="94"/>
    </location>
</feature>
<feature type="transmembrane region" description="Helical" evidence="3">
    <location>
        <begin position="111"/>
        <end position="131"/>
    </location>
</feature>
<feature type="short sequence motif" description="Di-leucine motif">
    <location>
        <begin position="143"/>
        <end position="144"/>
    </location>
</feature>
<comment type="function">
    <text evidence="1">Heme transporter that regulates intracellular heme availability through the endosomal or lysosomal compartment. In macrophages of the reticuloendothelial system, is the heme transporter for heme-iron recycling. Essential for macrophage iron homeostasis, transports heme from the phagolysosome to the cytoplasm during erythrophagocytosis (EP).</text>
</comment>
<comment type="catalytic activity">
    <reaction evidence="1">
        <text>heme b(in) = heme b(out)</text>
        <dbReference type="Rhea" id="RHEA:75443"/>
        <dbReference type="ChEBI" id="CHEBI:60344"/>
    </reaction>
</comment>
<comment type="subcellular location">
    <subcellularLocation>
        <location evidence="1">Endosome membrane</location>
        <topology evidence="1">Multi-pass membrane protein</topology>
    </subcellularLocation>
    <subcellularLocation>
        <location evidence="1">Lysosome membrane</location>
        <topology evidence="1">Multi-pass membrane protein</topology>
    </subcellularLocation>
    <subcellularLocation>
        <location evidence="2">Cytoplasmic vesicle</location>
        <location evidence="2">Phagosome membrane</location>
        <topology evidence="3">Multi-pass membrane protein</topology>
    </subcellularLocation>
    <text evidence="2">In macrophages, specifically localizes to the phagolysosomal membranes during erythrophagocytosis.</text>
</comment>
<comment type="similarity">
    <text evidence="4">Belongs to the HRG family.</text>
</comment>
<keyword id="KW-0968">Cytoplasmic vesicle</keyword>
<keyword id="KW-0967">Endosome</keyword>
<keyword id="KW-0458">Lysosome</keyword>
<keyword id="KW-0472">Membrane</keyword>
<keyword id="KW-1185">Reference proteome</keyword>
<keyword id="KW-0812">Transmembrane</keyword>
<keyword id="KW-1133">Transmembrane helix</keyword>
<keyword id="KW-0813">Transport</keyword>
<evidence type="ECO:0000250" key="1">
    <source>
        <dbReference type="UniProtKB" id="Q6P1K1"/>
    </source>
</evidence>
<evidence type="ECO:0000250" key="2">
    <source>
        <dbReference type="UniProtKB" id="Q9D8M3"/>
    </source>
</evidence>
<evidence type="ECO:0000255" key="3"/>
<evidence type="ECO:0000305" key="4"/>
<reference key="1">
    <citation type="journal article" date="2005" name="Genome Biol.">
        <title>Full-length cDNAs from chicken bursal lymphocytes to facilitate gene function analysis.</title>
        <authorList>
            <person name="Caldwell R.B."/>
            <person name="Kierzek A.M."/>
            <person name="Arakawa H."/>
            <person name="Bezzubov Y."/>
            <person name="Zaim J."/>
            <person name="Fiedler P."/>
            <person name="Kutter S."/>
            <person name="Blagodatski A."/>
            <person name="Kostovska D."/>
            <person name="Koter M."/>
            <person name="Plachy J."/>
            <person name="Carninci P."/>
            <person name="Hayashizaki Y."/>
            <person name="Buerstedde J.-M."/>
        </authorList>
    </citation>
    <scope>NUCLEOTIDE SEQUENCE [LARGE SCALE MRNA]</scope>
    <source>
        <strain>CB</strain>
        <tissue>Bursa of Fabricius</tissue>
    </source>
</reference>
<proteinExistence type="evidence at transcript level"/>
<name>HRG1_CHICK</name>
<dbReference type="EMBL" id="AJ721044">
    <property type="protein sequence ID" value="CAG32703.1"/>
    <property type="molecule type" value="mRNA"/>
</dbReference>
<dbReference type="RefSeq" id="NP_001026574.1">
    <property type="nucleotide sequence ID" value="NM_001031403.3"/>
</dbReference>
<dbReference type="FunCoup" id="Q5ZHU0">
    <property type="interactions" value="214"/>
</dbReference>
<dbReference type="STRING" id="9031.ENSGALP00000055141"/>
<dbReference type="PaxDb" id="9031-ENSGALP00000029015"/>
<dbReference type="GeneID" id="426887"/>
<dbReference type="KEGG" id="gga:426887"/>
<dbReference type="CTD" id="55652"/>
<dbReference type="VEuPathDB" id="HostDB:geneid_426887"/>
<dbReference type="eggNOG" id="ENOG502S0AI">
    <property type="taxonomic scope" value="Eukaryota"/>
</dbReference>
<dbReference type="InParanoid" id="Q5ZHU0"/>
<dbReference type="OrthoDB" id="5954402at2759"/>
<dbReference type="PhylomeDB" id="Q5ZHU0"/>
<dbReference type="PRO" id="PR:Q5ZHU0"/>
<dbReference type="Proteomes" id="UP000000539">
    <property type="component" value="Unassembled WGS sequence"/>
</dbReference>
<dbReference type="Bgee" id="ENSGALG00000036380">
    <property type="expression patterns" value="Expressed in lung and 13 other cell types or tissues"/>
</dbReference>
<dbReference type="GO" id="GO:0010008">
    <property type="term" value="C:endosome membrane"/>
    <property type="evidence" value="ECO:0007669"/>
    <property type="project" value="UniProtKB-SubCell"/>
</dbReference>
<dbReference type="GO" id="GO:0005765">
    <property type="term" value="C:lysosomal membrane"/>
    <property type="evidence" value="ECO:0000318"/>
    <property type="project" value="GO_Central"/>
</dbReference>
<dbReference type="GO" id="GO:0030670">
    <property type="term" value="C:phagocytic vesicle membrane"/>
    <property type="evidence" value="ECO:0007669"/>
    <property type="project" value="UniProtKB-SubCell"/>
</dbReference>
<dbReference type="GO" id="GO:0005886">
    <property type="term" value="C:plasma membrane"/>
    <property type="evidence" value="ECO:0000318"/>
    <property type="project" value="GO_Central"/>
</dbReference>
<dbReference type="GO" id="GO:0020037">
    <property type="term" value="F:heme binding"/>
    <property type="evidence" value="ECO:0000318"/>
    <property type="project" value="GO_Central"/>
</dbReference>
<dbReference type="GO" id="GO:0015232">
    <property type="term" value="F:heme transmembrane transporter activity"/>
    <property type="evidence" value="ECO:0000318"/>
    <property type="project" value="GO_Central"/>
</dbReference>
<dbReference type="GO" id="GO:0015886">
    <property type="term" value="P:heme transport"/>
    <property type="evidence" value="ECO:0000318"/>
    <property type="project" value="GO_Central"/>
</dbReference>
<dbReference type="InterPro" id="IPR026218">
    <property type="entry name" value="HRG"/>
</dbReference>
<dbReference type="PANTHER" id="PTHR31525">
    <property type="entry name" value="HEME TRANSPORTER HRG1"/>
    <property type="match status" value="1"/>
</dbReference>
<dbReference type="PANTHER" id="PTHR31525:SF1">
    <property type="entry name" value="HEME TRANSPORTER HRG1"/>
    <property type="match status" value="1"/>
</dbReference>
<dbReference type="Pfam" id="PF16954">
    <property type="entry name" value="HRG"/>
    <property type="match status" value="2"/>
</dbReference>
<dbReference type="PRINTS" id="PR02095">
    <property type="entry name" value="TRNSPORTRHRG"/>
</dbReference>